<keyword id="KW-1003">Cell membrane</keyword>
<keyword id="KW-0297">G-protein coupled receptor</keyword>
<keyword id="KW-0472">Membrane</keyword>
<keyword id="KW-0675">Receptor</keyword>
<keyword id="KW-1185">Reference proteome</keyword>
<keyword id="KW-0807">Transducer</keyword>
<keyword id="KW-0812">Transmembrane</keyword>
<keyword id="KW-1133">Transmembrane helix</keyword>
<comment type="function">
    <text evidence="1">High affinity receptor for melatonin. The activity of this receptor is mediated by pertussis toxin sensitive G proteins that inhibits adenylate cyclase activity (By similarity).</text>
</comment>
<comment type="subcellular location">
    <subcellularLocation>
        <location>Cell membrane</location>
        <topology>Multi-pass membrane protein</topology>
    </subcellularLocation>
</comment>
<comment type="similarity">
    <text evidence="3">Belongs to the G-protein coupled receptor 1 family.</text>
</comment>
<evidence type="ECO:0000250" key="1"/>
<evidence type="ECO:0000255" key="2"/>
<evidence type="ECO:0000255" key="3">
    <source>
        <dbReference type="PROSITE-ProRule" id="PRU00521"/>
    </source>
</evidence>
<organism>
    <name type="scientific">Danio rerio</name>
    <name type="common">Zebrafish</name>
    <name type="synonym">Brachydanio rerio</name>
    <dbReference type="NCBI Taxonomy" id="7955"/>
    <lineage>
        <taxon>Eukaryota</taxon>
        <taxon>Metazoa</taxon>
        <taxon>Chordata</taxon>
        <taxon>Craniata</taxon>
        <taxon>Vertebrata</taxon>
        <taxon>Euteleostomi</taxon>
        <taxon>Actinopterygii</taxon>
        <taxon>Neopterygii</taxon>
        <taxon>Teleostei</taxon>
        <taxon>Ostariophysi</taxon>
        <taxon>Cypriniformes</taxon>
        <taxon>Danionidae</taxon>
        <taxon>Danioninae</taxon>
        <taxon>Danio</taxon>
    </lineage>
</organism>
<gene>
    <name type="primary">mtnr1c</name>
    <name type="synonym">mel1c</name>
</gene>
<proteinExistence type="evidence at transcript level"/>
<protein>
    <recommendedName>
        <fullName>Melatonin receptor type 1C</fullName>
        <shortName>Mel-1C-R</shortName>
        <shortName>Mel1C receptor</shortName>
    </recommendedName>
    <alternativeName>
        <fullName>Melatonin receptor Mel1C Z2.3</fullName>
    </alternativeName>
</protein>
<sequence length="151" mass="17277">CHSLRYDRLYSRRNTCLYLLLTWMLTALATVPNFLVGSLKYDPRVFSCTFTQTASSSYTVCVVLIHFLVPLGVVSFCYLRIWTLVIRVKGRVRPNPKVRAADLRNFLTMFVVFVLFAVCWAPLNFIGLAVAINPAKVAPNIPEWLFVTSYF</sequence>
<reference key="1">
    <citation type="journal article" date="1995" name="Neuron">
        <title>Melatonin receptors are for the birds: molecular analysis of two receptor subtypes differentially expressed in chick brain.</title>
        <authorList>
            <person name="Reppert S.M."/>
            <person name="Weaver D.R."/>
            <person name="Cassone V.M."/>
            <person name="Godson C."/>
            <person name="Kolakowski L.F. Jr."/>
        </authorList>
    </citation>
    <scope>NUCLEOTIDE SEQUENCE [MRNA]</scope>
</reference>
<accession>P51052</accession>
<dbReference type="EMBL" id="U31825">
    <property type="protein sequence ID" value="AAA92497.1"/>
    <property type="molecule type" value="mRNA"/>
</dbReference>
<dbReference type="SMR" id="P51052"/>
<dbReference type="FunCoup" id="P51052">
    <property type="interactions" value="1"/>
</dbReference>
<dbReference type="STRING" id="7955.ENSDARP00000106863"/>
<dbReference type="PaxDb" id="7955-ENSDARP00000106863"/>
<dbReference type="AGR" id="ZFIN:ZDB-GENE-990415-158"/>
<dbReference type="ZFIN" id="ZDB-GENE-990415-158">
    <property type="gene designation" value="mtnr1c"/>
</dbReference>
<dbReference type="eggNOG" id="KOG3656">
    <property type="taxonomic scope" value="Eukaryota"/>
</dbReference>
<dbReference type="InParanoid" id="P51052"/>
<dbReference type="Proteomes" id="UP000000437">
    <property type="component" value="Unplaced"/>
</dbReference>
<dbReference type="GO" id="GO:0005886">
    <property type="term" value="C:plasma membrane"/>
    <property type="evidence" value="ECO:0007669"/>
    <property type="project" value="UniProtKB-SubCell"/>
</dbReference>
<dbReference type="GO" id="GO:0008502">
    <property type="term" value="F:melatonin receptor activity"/>
    <property type="evidence" value="ECO:0007669"/>
    <property type="project" value="InterPro"/>
</dbReference>
<dbReference type="FunFam" id="1.20.1070.10:FF:000557">
    <property type="entry name" value="Melatonin receptor type 1A"/>
    <property type="match status" value="1"/>
</dbReference>
<dbReference type="Gene3D" id="1.20.1070.10">
    <property type="entry name" value="Rhodopsin 7-helix transmembrane proteins"/>
    <property type="match status" value="1"/>
</dbReference>
<dbReference type="InterPro" id="IPR000276">
    <property type="entry name" value="GPCR_Rhodpsn"/>
</dbReference>
<dbReference type="InterPro" id="IPR017452">
    <property type="entry name" value="GPCR_Rhodpsn_7TM"/>
</dbReference>
<dbReference type="InterPro" id="IPR000025">
    <property type="entry name" value="Melatonin_rcpt"/>
</dbReference>
<dbReference type="PANTHER" id="PTHR24228">
    <property type="entry name" value="B2 BRADYKININ RECEPTOR/ANGIOTENSIN II RECEPTOR"/>
    <property type="match status" value="1"/>
</dbReference>
<dbReference type="PANTHER" id="PTHR24228:SF56">
    <property type="entry name" value="MELATONIN-RELATED RECEPTOR"/>
    <property type="match status" value="1"/>
</dbReference>
<dbReference type="Pfam" id="PF00001">
    <property type="entry name" value="7tm_1"/>
    <property type="match status" value="1"/>
</dbReference>
<dbReference type="PRINTS" id="PR00237">
    <property type="entry name" value="GPCRRHODOPSN"/>
</dbReference>
<dbReference type="PRINTS" id="PR00857">
    <property type="entry name" value="MELATONINR"/>
</dbReference>
<dbReference type="SUPFAM" id="SSF81321">
    <property type="entry name" value="Family A G protein-coupled receptor-like"/>
    <property type="match status" value="1"/>
</dbReference>
<dbReference type="PROSITE" id="PS50262">
    <property type="entry name" value="G_PROTEIN_RECEP_F1_2"/>
    <property type="match status" value="1"/>
</dbReference>
<feature type="chain" id="PRO_0000069875" description="Melatonin receptor type 1C">
    <location>
        <begin position="1" status="less than"/>
        <end position="151" status="greater than"/>
    </location>
</feature>
<feature type="topological domain" description="Cytoplasmic" evidence="2">
    <location>
        <begin position="1" status="less than"/>
        <end position="13"/>
    </location>
</feature>
<feature type="transmembrane region" description="Helical; Name=4" evidence="2">
    <location>
        <begin position="14"/>
        <end position="34"/>
    </location>
</feature>
<feature type="topological domain" description="Extracellular" evidence="2">
    <location>
        <begin position="35"/>
        <end position="58"/>
    </location>
</feature>
<feature type="transmembrane region" description="Helical; Name=5" evidence="2">
    <location>
        <begin position="59"/>
        <end position="79"/>
    </location>
</feature>
<feature type="topological domain" description="Cytoplasmic" evidence="2">
    <location>
        <begin position="80"/>
        <end position="109"/>
    </location>
</feature>
<feature type="transmembrane region" description="Helical; Name=6" evidence="2">
    <location>
        <begin position="110"/>
        <end position="130"/>
    </location>
</feature>
<feature type="topological domain" description="Extracellular" evidence="2">
    <location>
        <begin position="131"/>
        <end position="143"/>
    </location>
</feature>
<feature type="transmembrane region" description="Helical; Name=7" evidence="2">
    <location>
        <begin position="144"/>
        <end position="151" status="greater than"/>
    </location>
</feature>
<feature type="non-terminal residue">
    <location>
        <position position="1"/>
    </location>
</feature>
<feature type="non-terminal residue">
    <location>
        <position position="151"/>
    </location>
</feature>
<name>MTR1C_DANRE</name>